<reference key="1">
    <citation type="submission" date="2005-08" db="EMBL/GenBank/DDBJ databases">
        <authorList>
            <consortium name="NIH - Mammalian Gene Collection (MGC) project"/>
        </authorList>
    </citation>
    <scope>NUCLEOTIDE SEQUENCE [LARGE SCALE MRNA]</scope>
    <source>
        <strain>Crossbred X Angus</strain>
        <tissue>Ileum</tissue>
    </source>
</reference>
<accession>Q3T0Z4</accession>
<protein>
    <recommendedName>
        <fullName>Transmembrane 4 L6 family member 20</fullName>
    </recommendedName>
</protein>
<keyword id="KW-0256">Endoplasmic reticulum</keyword>
<keyword id="KW-0472">Membrane</keyword>
<keyword id="KW-1185">Reference proteome</keyword>
<keyword id="KW-0812">Transmembrane</keyword>
<keyword id="KW-1133">Transmembrane helix</keyword>
<proteinExistence type="evidence at transcript level"/>
<evidence type="ECO:0000250" key="1">
    <source>
        <dbReference type="UniProtKB" id="Q53R12"/>
    </source>
</evidence>
<evidence type="ECO:0000255" key="2"/>
<evidence type="ECO:0000305" key="3"/>
<gene>
    <name type="primary">TM4SF20</name>
</gene>
<dbReference type="EMBL" id="BC102196">
    <property type="protein sequence ID" value="AAI02197.1"/>
    <property type="molecule type" value="mRNA"/>
</dbReference>
<dbReference type="RefSeq" id="NP_001070449.1">
    <property type="nucleotide sequence ID" value="NM_001076981.1"/>
</dbReference>
<dbReference type="FunCoup" id="Q3T0Z4">
    <property type="interactions" value="21"/>
</dbReference>
<dbReference type="STRING" id="9913.ENSBTAP00000028426"/>
<dbReference type="PaxDb" id="9913-ENSBTAP00000028426"/>
<dbReference type="GeneID" id="767902"/>
<dbReference type="KEGG" id="bta:767902"/>
<dbReference type="CTD" id="79853"/>
<dbReference type="eggNOG" id="ENOG502RZTZ">
    <property type="taxonomic scope" value="Eukaryota"/>
</dbReference>
<dbReference type="InParanoid" id="Q3T0Z4"/>
<dbReference type="OrthoDB" id="9937421at2759"/>
<dbReference type="Proteomes" id="UP000009136">
    <property type="component" value="Unplaced"/>
</dbReference>
<dbReference type="GO" id="GO:0005789">
    <property type="term" value="C:endoplasmic reticulum membrane"/>
    <property type="evidence" value="ECO:0000250"/>
    <property type="project" value="UniProtKB"/>
</dbReference>
<dbReference type="GO" id="GO:0016020">
    <property type="term" value="C:membrane"/>
    <property type="evidence" value="ECO:0000318"/>
    <property type="project" value="GO_Central"/>
</dbReference>
<dbReference type="GO" id="GO:0045861">
    <property type="term" value="P:negative regulation of proteolysis"/>
    <property type="evidence" value="ECO:0000250"/>
    <property type="project" value="UniProtKB"/>
</dbReference>
<dbReference type="InterPro" id="IPR008661">
    <property type="entry name" value="L6_membrane"/>
</dbReference>
<dbReference type="PANTHER" id="PTHR14198">
    <property type="entry name" value="TRANSMEMBRANE 4 L6 FAMILY MEMBER 1-RELATED"/>
    <property type="match status" value="1"/>
</dbReference>
<dbReference type="PANTHER" id="PTHR14198:SF17">
    <property type="entry name" value="TRANSMEMBRANE 4 L6 FAMILY MEMBER 20"/>
    <property type="match status" value="1"/>
</dbReference>
<dbReference type="Pfam" id="PF05805">
    <property type="entry name" value="L6_membrane"/>
    <property type="match status" value="1"/>
</dbReference>
<comment type="function">
    <text evidence="1">Polytopic transmembrane protein. Inhibits regulated intramembrane proteolysis (RIP) of CREB3L1, inhibiting its activation and the induction of collagen synthesis. In response to ceramide, which alters TM4SF20 membrane topology, stimulates RIP activation of CREB3L1. Ceramide reverses the direction through which transmembrane helices are translocated into the endoplasmic reticulum membrane during translation of TM4SF20, this mechanism is called 'regulated alternative translocation' (RAT) and regulates the function of the transmembrane protein.</text>
</comment>
<comment type="subcellular location">
    <subcellularLocation>
        <location evidence="1">Membrane</location>
        <topology evidence="1">Multi-pass membrane protein</topology>
    </subcellularLocation>
    <subcellularLocation>
        <location evidence="1">Endoplasmic reticulum membrane</location>
        <topology evidence="1">Multi-pass membrane protein</topology>
    </subcellularLocation>
    <text evidence="1">Ceramide alters the direction through which transmembrane helices are translocated into the endoplasmic reticulum membrane during translation of TM4SF20.</text>
</comment>
<comment type="domain">
    <text evidence="1">The first transmembrane helix plays a critical role for the insertion orientation in the endoplasmic reticulum membrane.</text>
</comment>
<comment type="PTM">
    <text evidence="1">Glycosylated at Asn-132 in presence of ceramide which inverts the orientation of TM4SF20 in membranes exposing these residues to the endoplasmic reticulum lumen.</text>
</comment>
<comment type="PTM">
    <text evidence="1">Cleaved by signal peptidase at Ser-14 but the peptide does not act as a signal peptide. Cleavage is inhibited by ceramide which inverts the orientation of TM4SF20 in membranes exposing the N-terminus to the cytosol and not to the endoplasmic reticulum lumen.</text>
</comment>
<comment type="similarity">
    <text evidence="3">Belongs to the L6 tetraspanin family.</text>
</comment>
<organism>
    <name type="scientific">Bos taurus</name>
    <name type="common">Bovine</name>
    <dbReference type="NCBI Taxonomy" id="9913"/>
    <lineage>
        <taxon>Eukaryota</taxon>
        <taxon>Metazoa</taxon>
        <taxon>Chordata</taxon>
        <taxon>Craniata</taxon>
        <taxon>Vertebrata</taxon>
        <taxon>Euteleostomi</taxon>
        <taxon>Mammalia</taxon>
        <taxon>Eutheria</taxon>
        <taxon>Laurasiatheria</taxon>
        <taxon>Artiodactyla</taxon>
        <taxon>Ruminantia</taxon>
        <taxon>Pecora</taxon>
        <taxon>Bovidae</taxon>
        <taxon>Bovinae</taxon>
        <taxon>Bos</taxon>
    </lineage>
</organism>
<name>T4S20_BOVIN</name>
<sequence length="230" mass="25214">MTCCEGWTSCNGFSLLVLLLLGVTLNAIPLILNFVDEDQFFENPISCFEWWFPGIIGAGVMAIPATTMSLAARKRACCNNKTGMFLSSLLNAITVIGAAYCLLVSIQALAEGPLICNSQSNTTSSCEFSLKNLTANYKESFDLQWFFEDSCVPHTDSNNPSITNTTANNWRVYNLHFNSIENQHRIIHFSVFLGLLLVGILEILFGLSQIIIGFFGCLCGGVSNGRSQIV</sequence>
<feature type="chain" id="PRO_0000251227" description="Transmembrane 4 L6 family member 20">
    <location>
        <begin position="1"/>
        <end position="230"/>
    </location>
</feature>
<feature type="topological domain" description="Lumenal" evidence="3">
    <location>
        <begin position="1"/>
        <end position="11"/>
    </location>
</feature>
<feature type="transmembrane region" description="Helical" evidence="2">
    <location>
        <begin position="12"/>
        <end position="32"/>
    </location>
</feature>
<feature type="topological domain" description="Cytoplasmic" evidence="3">
    <location>
        <begin position="33"/>
        <end position="44"/>
    </location>
</feature>
<feature type="transmembrane region" description="Helical" evidence="2">
    <location>
        <begin position="45"/>
        <end position="65"/>
    </location>
</feature>
<feature type="topological domain" description="Lumenal" evidence="3">
    <location>
        <begin position="66"/>
        <end position="83"/>
    </location>
</feature>
<feature type="transmembrane region" description="Helical" evidence="2">
    <location>
        <begin position="84"/>
        <end position="104"/>
    </location>
</feature>
<feature type="topological domain" description="Cytoplasmic" evidence="3">
    <location>
        <begin position="105"/>
        <end position="185"/>
    </location>
</feature>
<feature type="transmembrane region" description="Helical" evidence="2">
    <location>
        <begin position="186"/>
        <end position="206"/>
    </location>
</feature>
<feature type="topological domain" description="Lumenal" evidence="3">
    <location>
        <begin position="207"/>
        <end position="230"/>
    </location>
</feature>
<feature type="site" description="Cleavage" evidence="1">
    <location>
        <begin position="13"/>
        <end position="14"/>
    </location>
</feature>